<dbReference type="EMBL" id="AE000666">
    <property type="protein sequence ID" value="AAB84892.1"/>
    <property type="molecule type" value="Genomic_DNA"/>
</dbReference>
<dbReference type="PIR" id="A69150">
    <property type="entry name" value="A69150"/>
</dbReference>
<dbReference type="SMR" id="O26486"/>
<dbReference type="FunCoup" id="O26486">
    <property type="interactions" value="4"/>
</dbReference>
<dbReference type="STRING" id="187420.MTH_386"/>
<dbReference type="PaxDb" id="187420-MTH_386"/>
<dbReference type="EnsemblBacteria" id="AAB84892">
    <property type="protein sequence ID" value="AAB84892"/>
    <property type="gene ID" value="MTH_386"/>
</dbReference>
<dbReference type="KEGG" id="mth:MTH_386"/>
<dbReference type="PATRIC" id="fig|187420.15.peg.355"/>
<dbReference type="HOGENOM" id="CLU_174513_1_0_2"/>
<dbReference type="InParanoid" id="O26486"/>
<dbReference type="Proteomes" id="UP000005223">
    <property type="component" value="Chromosome"/>
</dbReference>
<dbReference type="InterPro" id="IPR019214">
    <property type="entry name" value="DUF2109_membrane"/>
</dbReference>
<dbReference type="InterPro" id="IPR011316">
    <property type="entry name" value="Prd_NiFe_hyd_3_EhaC"/>
</dbReference>
<dbReference type="Pfam" id="PF09882">
    <property type="entry name" value="DUF2109"/>
    <property type="match status" value="1"/>
</dbReference>
<dbReference type="PIRSF" id="PIRSF036534">
    <property type="entry name" value="EhaC"/>
    <property type="match status" value="1"/>
</dbReference>
<organism>
    <name type="scientific">Methanothermobacter thermautotrophicus (strain ATCC 29096 / DSM 1053 / JCM 10044 / NBRC 100330 / Delta H)</name>
    <name type="common">Methanobacterium thermoautotrophicum</name>
    <dbReference type="NCBI Taxonomy" id="187420"/>
    <lineage>
        <taxon>Archaea</taxon>
        <taxon>Methanobacteriati</taxon>
        <taxon>Methanobacteriota</taxon>
        <taxon>Methanomada group</taxon>
        <taxon>Methanobacteria</taxon>
        <taxon>Methanobacteriales</taxon>
        <taxon>Methanobacteriaceae</taxon>
        <taxon>Methanothermobacter</taxon>
    </lineage>
</organism>
<reference key="1">
    <citation type="journal article" date="1997" name="J. Bacteriol.">
        <title>Complete genome sequence of Methanobacterium thermoautotrophicum deltaH: functional analysis and comparative genomics.</title>
        <authorList>
            <person name="Smith D.R."/>
            <person name="Doucette-Stamm L.A."/>
            <person name="Deloughery C."/>
            <person name="Lee H.-M."/>
            <person name="Dubois J."/>
            <person name="Aldredge T."/>
            <person name="Bashirzadeh R."/>
            <person name="Blakely D."/>
            <person name="Cook R."/>
            <person name="Gilbert K."/>
            <person name="Harrison D."/>
            <person name="Hoang L."/>
            <person name="Keagle P."/>
            <person name="Lumm W."/>
            <person name="Pothier B."/>
            <person name="Qiu D."/>
            <person name="Spadafora R."/>
            <person name="Vicare R."/>
            <person name="Wang Y."/>
            <person name="Wierzbowski J."/>
            <person name="Gibson R."/>
            <person name="Jiwani N."/>
            <person name="Caruso A."/>
            <person name="Bush D."/>
            <person name="Safer H."/>
            <person name="Patwell D."/>
            <person name="Prabhakar S."/>
            <person name="McDougall S."/>
            <person name="Shimer G."/>
            <person name="Goyal A."/>
            <person name="Pietrovski S."/>
            <person name="Church G.M."/>
            <person name="Daniels C.J."/>
            <person name="Mao J.-I."/>
            <person name="Rice P."/>
            <person name="Noelling J."/>
            <person name="Reeve J.N."/>
        </authorList>
    </citation>
    <scope>NUCLEOTIDE SEQUENCE [LARGE SCALE GENOMIC DNA]</scope>
    <source>
        <strain>ATCC 29096 / DSM 1053 / JCM 10044 / NBRC 100330 / Delta H</strain>
    </source>
</reference>
<comment type="similarity">
    <text evidence="1">To M.jannaschii MJ0526.1.</text>
</comment>
<sequence length="86" mass="9321">MLIMLIQITGIIVVLMALRTLLAQDRAERLLYLNAMSFGISAMIALYVGTAFGAVLATVYFVASTITSNAIAHTLDRVGEEMVIED</sequence>
<evidence type="ECO:0000305" key="1"/>
<gene>
    <name type="ordered locus">MTH_386</name>
</gene>
<accession>O26486</accession>
<feature type="chain" id="PRO_0000106917" description="Uncharacterized protein MTH_386">
    <location>
        <begin position="1"/>
        <end position="86"/>
    </location>
</feature>
<proteinExistence type="predicted"/>
<keyword id="KW-1185">Reference proteome</keyword>
<protein>
    <recommendedName>
        <fullName>Uncharacterized protein MTH_386</fullName>
    </recommendedName>
</protein>
<name>Y386_METTH</name>